<protein>
    <recommendedName>
        <fullName>Complement C1q-like protein 4</fullName>
    </recommendedName>
    <alternativeName>
        <fullName>C1q and tumor necrosis factor-related protein 11</fullName>
        <shortName>C1q/TNF-related protein 11</shortName>
        <shortName>C1qTNF11</shortName>
        <shortName>CTRP11</shortName>
    </alternativeName>
</protein>
<proteinExistence type="evidence at protein level"/>
<organism>
    <name type="scientific">Mus musculus</name>
    <name type="common">Mouse</name>
    <dbReference type="NCBI Taxonomy" id="10090"/>
    <lineage>
        <taxon>Eukaryota</taxon>
        <taxon>Metazoa</taxon>
        <taxon>Chordata</taxon>
        <taxon>Craniata</taxon>
        <taxon>Vertebrata</taxon>
        <taxon>Euteleostomi</taxon>
        <taxon>Mammalia</taxon>
        <taxon>Eutheria</taxon>
        <taxon>Euarchontoglires</taxon>
        <taxon>Glires</taxon>
        <taxon>Rodentia</taxon>
        <taxon>Myomorpha</taxon>
        <taxon>Muroidea</taxon>
        <taxon>Muridae</taxon>
        <taxon>Murinae</taxon>
        <taxon>Mus</taxon>
        <taxon>Mus</taxon>
    </lineage>
</organism>
<sequence length="238" mass="24928">MVLLLLVAIPLLVHSSRGPTHYEMLGRCRMVCDPHASRGQGPDGAPASVPSLPPGAKGEVGRRGKAGLRGPPGPPGPRGPPGEPGRPGPPGPPGPGPGGAAPPAGYVPRIAFYAGLRRPHEGYEVLRFDDVVTNVGNAYEAASGKFTCPMPGVYFFAYHVLMRGGDGTSMWADLMKNGQVRASAIAQDADQNYDYASNSVILHLDVGDEVFIKLDGGKVHGGNTNKYSTFSGFIIYPD</sequence>
<evidence type="ECO:0000255" key="1"/>
<evidence type="ECO:0000255" key="2">
    <source>
        <dbReference type="PROSITE-ProRule" id="PRU00368"/>
    </source>
</evidence>
<evidence type="ECO:0000256" key="3">
    <source>
        <dbReference type="SAM" id="MobiDB-lite"/>
    </source>
</evidence>
<evidence type="ECO:0000269" key="4">
    <source>
    </source>
</evidence>
<evidence type="ECO:0000269" key="5">
    <source>
    </source>
</evidence>
<reference key="1">
    <citation type="journal article" date="2013" name="J. Biol. Chem.">
        <title>C1q/tumor necrosis factor-related protein 11 (CTRP11), a novel adipose stroma-derived regulator of adipogenesis.</title>
        <authorList>
            <person name="Wei Z."/>
            <person name="Seldin M.M."/>
            <person name="Natarajan N."/>
            <person name="Djemal D.C."/>
            <person name="Peterson J.M."/>
            <person name="Wong G.W."/>
        </authorList>
    </citation>
    <scope>NUCLEOTIDE SEQUENCE [MRNA]</scope>
    <scope>FUNCTION IN ADIPOGENESIS</scope>
    <scope>HOMOOLIGOMERIZATION</scope>
    <scope>INTERACTION WITH C1QL1; C1QL2 AND C1QL3</scope>
    <scope>SUBCELLULAR LOCATION</scope>
    <scope>TISSUE SPECIFICITY</scope>
    <scope>INDUCTION</scope>
    <scope>MUTAGENESIS OF CYS-28 AND CYS-32</scope>
    <source>
        <strain>C57BL/6J</strain>
        <tissue>Testis</tissue>
    </source>
</reference>
<reference key="2">
    <citation type="submission" date="2005-09" db="EMBL/GenBank/DDBJ databases">
        <authorList>
            <person name="Mural R.J."/>
            <person name="Adams M.D."/>
            <person name="Myers E.W."/>
            <person name="Smith H.O."/>
            <person name="Venter J.C."/>
        </authorList>
    </citation>
    <scope>NUCLEOTIDE SEQUENCE [LARGE SCALE GENOMIC DNA]</scope>
</reference>
<reference key="3">
    <citation type="journal article" date="2004" name="Genome Res.">
        <title>The status, quality, and expansion of the NIH full-length cDNA project: the Mammalian Gene Collection (MGC).</title>
        <authorList>
            <consortium name="The MGC Project Team"/>
        </authorList>
    </citation>
    <scope>NUCLEOTIDE SEQUENCE [LARGE SCALE MRNA]</scope>
    <source>
        <tissue>Brain</tissue>
    </source>
</reference>
<reference key="4">
    <citation type="journal article" date="2011" name="Proc. Natl. Acad. Sci. U.S.A.">
        <title>The cell-adhesion G protein-coupled receptor BAI3 is a high-affinity receptor for C1q-like proteins.</title>
        <authorList>
            <person name="Bolliger M.F."/>
            <person name="Martinelli D.C."/>
            <person name="Sudhof T.C."/>
        </authorList>
    </citation>
    <scope>FUNCTION</scope>
    <scope>INTERACTION WITH ADGRB3</scope>
</reference>
<comment type="function">
    <text evidence="4 5">May regulate the number of excitatory synapses that are formed on hippocampus neurons. Has no effect on inhibitory synapses. May inhibit adipocyte differentiation at an early stage of the process.</text>
</comment>
<comment type="subunit">
    <text evidence="4 5">Forms homooligomers, predominantly dimers or trimers. Forms heterooligomers with C1QL1, C1QL2 and C1QL3, when proteins are coexpressed; this interaction does not occur after secretion (PubMed:23449976). Interacts with ADGRB3 (PubMed:21262840).</text>
</comment>
<comment type="subcellular location">
    <subcellularLocation>
        <location evidence="5">Secreted</location>
    </subcellularLocation>
</comment>
<comment type="tissue specificity">
    <text evidence="5">Highly expressed in testis and adipose tissue, brown adipose tissue expressing higher levels than subcutaneous and visceral white adipose tissue. In gonadal fat pad, expressed at lower levels in adipocytes than in the stromal vascular fraction (VSP), which contains preadipocytes, fibroblasts, endothelial cells and occasional immune cells. Expression exhibits sexually dimorphism, with higher levels in females than in males.</text>
</comment>
<comment type="induction">
    <text evidence="5">Down-regulated in fasted animals.</text>
</comment>
<keyword id="KW-0176">Collagen</keyword>
<keyword id="KW-1185">Reference proteome</keyword>
<keyword id="KW-0964">Secreted</keyword>
<keyword id="KW-0732">Signal</keyword>
<feature type="signal peptide" evidence="1">
    <location>
        <begin position="1"/>
        <end position="15"/>
    </location>
</feature>
<feature type="chain" id="PRO_0000274339" description="Complement C1q-like protein 4">
    <location>
        <begin position="16"/>
        <end position="238"/>
    </location>
</feature>
<feature type="domain" description="Collagen-like">
    <location>
        <begin position="53"/>
        <end position="96"/>
    </location>
</feature>
<feature type="domain" description="C1q" evidence="2">
    <location>
        <begin position="105"/>
        <end position="238"/>
    </location>
</feature>
<feature type="region of interest" description="Disordered" evidence="3">
    <location>
        <begin position="37"/>
        <end position="102"/>
    </location>
</feature>
<feature type="compositionally biased region" description="Pro residues" evidence="3">
    <location>
        <begin position="71"/>
        <end position="96"/>
    </location>
</feature>
<feature type="mutagenesis site" description="Does not affect homo-, nor heterooligomerization with C1QL1, C1QL2 and C1QL3; when associated with A-32. Increased secretion; when associated with A-32. Does not impair inhibition of adipocyte differentiation; when associated with A-32." evidence="5">
    <original>C</original>
    <variation>A</variation>
    <location>
        <position position="28"/>
    </location>
</feature>
<feature type="mutagenesis site" description="Does not affect homo-, nor heterooligomerization with C1QL1, C1QL2 and C1QL3; when associated with A-28. Increased secretion; when associated with A-28. Does not impair inhibition of adipocyte differentiation; when associated with A-28." evidence="5">
    <original>C</original>
    <variation>A</variation>
    <location>
        <position position="32"/>
    </location>
</feature>
<dbReference type="EMBL" id="DQ002403">
    <property type="protein sequence ID" value="AAY21935.1"/>
    <property type="molecule type" value="mRNA"/>
</dbReference>
<dbReference type="EMBL" id="CH466550">
    <property type="protein sequence ID" value="EDL04144.1"/>
    <property type="molecule type" value="Genomic_DNA"/>
</dbReference>
<dbReference type="EMBL" id="BC147036">
    <property type="protein sequence ID" value="AAI47037.1"/>
    <property type="molecule type" value="mRNA"/>
</dbReference>
<dbReference type="EMBL" id="BC147037">
    <property type="protein sequence ID" value="AAI47038.1"/>
    <property type="molecule type" value="mRNA"/>
</dbReference>
<dbReference type="CCDS" id="CCDS27814.1"/>
<dbReference type="RefSeq" id="NP_001019873.1">
    <property type="nucleotide sequence ID" value="NM_001024702.1"/>
</dbReference>
<dbReference type="RefSeq" id="XP_006521038.1">
    <property type="nucleotide sequence ID" value="XM_006520975.3"/>
</dbReference>
<dbReference type="RefSeq" id="XP_030104424.1">
    <property type="nucleotide sequence ID" value="XM_030248564.1"/>
</dbReference>
<dbReference type="SMR" id="Q4ZJM9"/>
<dbReference type="BioGRID" id="232112">
    <property type="interactions" value="1"/>
</dbReference>
<dbReference type="FunCoup" id="Q4ZJM9">
    <property type="interactions" value="489"/>
</dbReference>
<dbReference type="STRING" id="10090.ENSMUSP00000068402"/>
<dbReference type="PhosphoSitePlus" id="Q4ZJM9"/>
<dbReference type="PaxDb" id="10090-ENSMUSP00000068402"/>
<dbReference type="Antibodypedia" id="66308">
    <property type="antibodies" value="62 antibodies from 14 providers"/>
</dbReference>
<dbReference type="DNASU" id="239659"/>
<dbReference type="Ensembl" id="ENSMUST00000064462.5">
    <property type="protein sequence ID" value="ENSMUSP00000068402.4"/>
    <property type="gene ID" value="ENSMUSG00000001076.8"/>
</dbReference>
<dbReference type="GeneID" id="239659"/>
<dbReference type="KEGG" id="mmu:239659"/>
<dbReference type="UCSC" id="uc007xot.1">
    <property type="organism name" value="mouse"/>
</dbReference>
<dbReference type="AGR" id="MGI:3579909"/>
<dbReference type="CTD" id="338761"/>
<dbReference type="MGI" id="MGI:3579909">
    <property type="gene designation" value="C1ql4"/>
</dbReference>
<dbReference type="VEuPathDB" id="HostDB:ENSMUSG00000001076"/>
<dbReference type="eggNOG" id="ENOG502QSVI">
    <property type="taxonomic scope" value="Eukaryota"/>
</dbReference>
<dbReference type="GeneTree" id="ENSGT00940000155969"/>
<dbReference type="HOGENOM" id="CLU_001074_3_1_1"/>
<dbReference type="InParanoid" id="Q4ZJM9"/>
<dbReference type="OMA" id="GPTHYEM"/>
<dbReference type="OrthoDB" id="10070467at2759"/>
<dbReference type="PhylomeDB" id="Q4ZJM9"/>
<dbReference type="TreeFam" id="TF329591"/>
<dbReference type="BioGRID-ORCS" id="239659">
    <property type="hits" value="6 hits in 79 CRISPR screens"/>
</dbReference>
<dbReference type="PRO" id="PR:Q4ZJM9"/>
<dbReference type="Proteomes" id="UP000000589">
    <property type="component" value="Chromosome 15"/>
</dbReference>
<dbReference type="RNAct" id="Q4ZJM9">
    <property type="molecule type" value="protein"/>
</dbReference>
<dbReference type="Bgee" id="ENSMUSG00000001076">
    <property type="expression patterns" value="Expressed in embryonic brain and 24 other cell types or tissues"/>
</dbReference>
<dbReference type="GO" id="GO:0005581">
    <property type="term" value="C:collagen trimer"/>
    <property type="evidence" value="ECO:0007669"/>
    <property type="project" value="UniProtKB-KW"/>
</dbReference>
<dbReference type="GO" id="GO:0005615">
    <property type="term" value="C:extracellular space"/>
    <property type="evidence" value="ECO:0000314"/>
    <property type="project" value="MGI"/>
</dbReference>
<dbReference type="GO" id="GO:0042802">
    <property type="term" value="F:identical protein binding"/>
    <property type="evidence" value="ECO:0000314"/>
    <property type="project" value="MGI"/>
</dbReference>
<dbReference type="GO" id="GO:0070371">
    <property type="term" value="P:ERK1 and ERK2 cascade"/>
    <property type="evidence" value="ECO:0000314"/>
    <property type="project" value="MGI"/>
</dbReference>
<dbReference type="GO" id="GO:0048144">
    <property type="term" value="P:fibroblast proliferation"/>
    <property type="evidence" value="ECO:0000314"/>
    <property type="project" value="MGI"/>
</dbReference>
<dbReference type="GO" id="GO:0070373">
    <property type="term" value="P:negative regulation of ERK1 and ERK2 cascade"/>
    <property type="evidence" value="ECO:0000314"/>
    <property type="project" value="MGI"/>
</dbReference>
<dbReference type="GO" id="GO:0045599">
    <property type="term" value="P:negative regulation of fat cell differentiation"/>
    <property type="evidence" value="ECO:0000314"/>
    <property type="project" value="MGI"/>
</dbReference>
<dbReference type="GO" id="GO:0048147">
    <property type="term" value="P:negative regulation of fibroblast proliferation"/>
    <property type="evidence" value="ECO:0000314"/>
    <property type="project" value="MGI"/>
</dbReference>
<dbReference type="FunFam" id="2.60.120.40:FF:000001">
    <property type="entry name" value="Complement C1q B chain"/>
    <property type="match status" value="1"/>
</dbReference>
<dbReference type="Gene3D" id="2.60.120.40">
    <property type="match status" value="1"/>
</dbReference>
<dbReference type="InterPro" id="IPR001073">
    <property type="entry name" value="C1q_dom"/>
</dbReference>
<dbReference type="InterPro" id="IPR050822">
    <property type="entry name" value="Cerebellin_Synaptic_Org"/>
</dbReference>
<dbReference type="InterPro" id="IPR008983">
    <property type="entry name" value="Tumour_necrosis_fac-like_dom"/>
</dbReference>
<dbReference type="PANTHER" id="PTHR22923">
    <property type="entry name" value="CEREBELLIN-RELATED"/>
    <property type="match status" value="1"/>
</dbReference>
<dbReference type="PANTHER" id="PTHR22923:SF67">
    <property type="entry name" value="COMPLEMENT C1Q-LIKE PROTEIN 4"/>
    <property type="match status" value="1"/>
</dbReference>
<dbReference type="Pfam" id="PF00386">
    <property type="entry name" value="C1q"/>
    <property type="match status" value="1"/>
</dbReference>
<dbReference type="PRINTS" id="PR00007">
    <property type="entry name" value="COMPLEMNTC1Q"/>
</dbReference>
<dbReference type="SMART" id="SM00110">
    <property type="entry name" value="C1Q"/>
    <property type="match status" value="1"/>
</dbReference>
<dbReference type="SUPFAM" id="SSF49842">
    <property type="entry name" value="TNF-like"/>
    <property type="match status" value="1"/>
</dbReference>
<dbReference type="PROSITE" id="PS50871">
    <property type="entry name" value="C1Q"/>
    <property type="match status" value="1"/>
</dbReference>
<gene>
    <name type="primary">C1ql4</name>
    <name type="synonym">C1qtnf11</name>
    <name type="synonym">Ctrp11</name>
</gene>
<accession>Q4ZJM9</accession>
<accession>B2RV40</accession>
<name>C1QL4_MOUSE</name>